<name>GPMB_SALNS</name>
<feature type="chain" id="PRO_1000136016" description="Probable phosphoglycerate mutase GpmB">
    <location>
        <begin position="1"/>
        <end position="215"/>
    </location>
</feature>
<feature type="active site" description="Tele-phosphohistidine intermediate" evidence="1">
    <location>
        <position position="9"/>
    </location>
</feature>
<feature type="active site" description="Proton donor/acceptor" evidence="1">
    <location>
        <position position="82"/>
    </location>
</feature>
<feature type="binding site" evidence="1">
    <location>
        <begin position="8"/>
        <end position="15"/>
    </location>
    <ligand>
        <name>substrate</name>
    </ligand>
</feature>
<feature type="binding site" evidence="1">
    <location>
        <begin position="21"/>
        <end position="22"/>
    </location>
    <ligand>
        <name>substrate</name>
    </ligand>
</feature>
<feature type="binding site" evidence="1">
    <location>
        <position position="58"/>
    </location>
    <ligand>
        <name>substrate</name>
    </ligand>
</feature>
<feature type="binding site" evidence="1">
    <location>
        <position position="60"/>
    </location>
    <ligand>
        <name>substrate</name>
    </ligand>
</feature>
<feature type="binding site" evidence="1">
    <location>
        <begin position="82"/>
        <end position="85"/>
    </location>
    <ligand>
        <name>substrate</name>
    </ligand>
</feature>
<feature type="binding site" evidence="1">
    <location>
        <begin position="104"/>
        <end position="105"/>
    </location>
    <ligand>
        <name>substrate</name>
    </ligand>
</feature>
<feature type="binding site" evidence="1">
    <location>
        <begin position="151"/>
        <end position="152"/>
    </location>
    <ligand>
        <name>substrate</name>
    </ligand>
</feature>
<feature type="site" description="Transition state stabilizer" evidence="1">
    <location>
        <position position="150"/>
    </location>
</feature>
<reference key="1">
    <citation type="journal article" date="2011" name="J. Bacteriol.">
        <title>Comparative genomics of 28 Salmonella enterica isolates: evidence for CRISPR-mediated adaptive sublineage evolution.</title>
        <authorList>
            <person name="Fricke W.F."/>
            <person name="Mammel M.K."/>
            <person name="McDermott P.F."/>
            <person name="Tartera C."/>
            <person name="White D.G."/>
            <person name="Leclerc J.E."/>
            <person name="Ravel J."/>
            <person name="Cebula T.A."/>
        </authorList>
    </citation>
    <scope>NUCLEOTIDE SEQUENCE [LARGE SCALE GENOMIC DNA]</scope>
    <source>
        <strain>SL254</strain>
    </source>
</reference>
<keyword id="KW-0324">Glycolysis</keyword>
<keyword id="KW-0413">Isomerase</keyword>
<evidence type="ECO:0000255" key="1">
    <source>
        <dbReference type="HAMAP-Rule" id="MF_01040"/>
    </source>
</evidence>
<protein>
    <recommendedName>
        <fullName evidence="1">Probable phosphoglycerate mutase GpmB</fullName>
        <ecNumber evidence="1">5.4.2.-</ecNumber>
    </recommendedName>
    <alternativeName>
        <fullName evidence="1">PGAM</fullName>
    </alternativeName>
    <alternativeName>
        <fullName evidence="1">Phosphoglyceromutase</fullName>
    </alternativeName>
</protein>
<sequence>MLQVYLVRHGETQWNAERRIQGQSDSPLTAKGEQQAMQVGERARSLGITHIISSDLGRTKRTAEIIAQACGCDITFDSRLRELDMGVLEKRQIDSLTEEEEGWRRQLVNGTQDGRIPGGESMQELSDRVHAALASCLELPQGSRPLLVSHGIALGCLVSTILGLPAWAERRLRLRNCSISRIDYQESQWLASGWVVETAGDVSHLDAPALDELQR</sequence>
<comment type="catalytic activity">
    <reaction evidence="1">
        <text>(2R)-2-phosphoglycerate = (2R)-3-phosphoglycerate</text>
        <dbReference type="Rhea" id="RHEA:15901"/>
        <dbReference type="ChEBI" id="CHEBI:58272"/>
        <dbReference type="ChEBI" id="CHEBI:58289"/>
    </reaction>
</comment>
<comment type="pathway">
    <text evidence="1">Carbohydrate degradation; glycolysis; pyruvate from D-glyceraldehyde 3-phosphate: step 3/5.</text>
</comment>
<comment type="similarity">
    <text evidence="1">Belongs to the phosphoglycerate mutase family. GpmB subfamily.</text>
</comment>
<gene>
    <name evidence="1" type="primary">gpmB</name>
    <name type="ordered locus">SNSL254_A4943</name>
</gene>
<accession>B4T4I9</accession>
<dbReference type="EC" id="5.4.2.-" evidence="1"/>
<dbReference type="EMBL" id="CP001113">
    <property type="protein sequence ID" value="ACF64032.1"/>
    <property type="molecule type" value="Genomic_DNA"/>
</dbReference>
<dbReference type="RefSeq" id="WP_000942363.1">
    <property type="nucleotide sequence ID" value="NZ_CCMR01000003.1"/>
</dbReference>
<dbReference type="SMR" id="B4T4I9"/>
<dbReference type="KEGG" id="see:SNSL254_A4943"/>
<dbReference type="HOGENOM" id="CLU_033323_9_5_6"/>
<dbReference type="UniPathway" id="UPA00109">
    <property type="reaction ID" value="UER00186"/>
</dbReference>
<dbReference type="Proteomes" id="UP000008824">
    <property type="component" value="Chromosome"/>
</dbReference>
<dbReference type="GO" id="GO:0005737">
    <property type="term" value="C:cytoplasm"/>
    <property type="evidence" value="ECO:0007669"/>
    <property type="project" value="TreeGrafter"/>
</dbReference>
<dbReference type="GO" id="GO:0016791">
    <property type="term" value="F:phosphatase activity"/>
    <property type="evidence" value="ECO:0007669"/>
    <property type="project" value="TreeGrafter"/>
</dbReference>
<dbReference type="GO" id="GO:0004619">
    <property type="term" value="F:phosphoglycerate mutase activity"/>
    <property type="evidence" value="ECO:0007669"/>
    <property type="project" value="UniProtKB-UniRule"/>
</dbReference>
<dbReference type="GO" id="GO:0006096">
    <property type="term" value="P:glycolytic process"/>
    <property type="evidence" value="ECO:0007669"/>
    <property type="project" value="UniProtKB-UniRule"/>
</dbReference>
<dbReference type="CDD" id="cd07067">
    <property type="entry name" value="HP_PGM_like"/>
    <property type="match status" value="1"/>
</dbReference>
<dbReference type="Gene3D" id="3.40.50.1240">
    <property type="entry name" value="Phosphoglycerate mutase-like"/>
    <property type="match status" value="1"/>
</dbReference>
<dbReference type="HAMAP" id="MF_01040">
    <property type="entry name" value="PGAM_GpmB"/>
    <property type="match status" value="1"/>
</dbReference>
<dbReference type="InterPro" id="IPR013078">
    <property type="entry name" value="His_Pase_superF_clade-1"/>
</dbReference>
<dbReference type="InterPro" id="IPR029033">
    <property type="entry name" value="His_PPase_superfam"/>
</dbReference>
<dbReference type="InterPro" id="IPR001345">
    <property type="entry name" value="PG/BPGM_mutase_AS"/>
</dbReference>
<dbReference type="InterPro" id="IPR050275">
    <property type="entry name" value="PGM_Phosphatase"/>
</dbReference>
<dbReference type="InterPro" id="IPR023086">
    <property type="entry name" value="Phosphoglycerate_mutase_GpmB"/>
</dbReference>
<dbReference type="NCBIfam" id="NF002901">
    <property type="entry name" value="PRK03482.1"/>
    <property type="match status" value="1"/>
</dbReference>
<dbReference type="PANTHER" id="PTHR48100">
    <property type="entry name" value="BROAD-SPECIFICITY PHOSPHATASE YOR283W-RELATED"/>
    <property type="match status" value="1"/>
</dbReference>
<dbReference type="PANTHER" id="PTHR48100:SF1">
    <property type="entry name" value="HISTIDINE PHOSPHATASE FAMILY PROTEIN-RELATED"/>
    <property type="match status" value="1"/>
</dbReference>
<dbReference type="Pfam" id="PF00300">
    <property type="entry name" value="His_Phos_1"/>
    <property type="match status" value="1"/>
</dbReference>
<dbReference type="SMART" id="SM00855">
    <property type="entry name" value="PGAM"/>
    <property type="match status" value="1"/>
</dbReference>
<dbReference type="SUPFAM" id="SSF53254">
    <property type="entry name" value="Phosphoglycerate mutase-like"/>
    <property type="match status" value="1"/>
</dbReference>
<dbReference type="PROSITE" id="PS00175">
    <property type="entry name" value="PG_MUTASE"/>
    <property type="match status" value="1"/>
</dbReference>
<organism>
    <name type="scientific">Salmonella newport (strain SL254)</name>
    <dbReference type="NCBI Taxonomy" id="423368"/>
    <lineage>
        <taxon>Bacteria</taxon>
        <taxon>Pseudomonadati</taxon>
        <taxon>Pseudomonadota</taxon>
        <taxon>Gammaproteobacteria</taxon>
        <taxon>Enterobacterales</taxon>
        <taxon>Enterobacteriaceae</taxon>
        <taxon>Salmonella</taxon>
    </lineage>
</organism>
<proteinExistence type="inferred from homology"/>